<proteinExistence type="inferred from homology"/>
<organism>
    <name type="scientific">Lactococcus lactis subsp. cremoris (strain SK11)</name>
    <dbReference type="NCBI Taxonomy" id="272622"/>
    <lineage>
        <taxon>Bacteria</taxon>
        <taxon>Bacillati</taxon>
        <taxon>Bacillota</taxon>
        <taxon>Bacilli</taxon>
        <taxon>Lactobacillales</taxon>
        <taxon>Streptococcaceae</taxon>
        <taxon>Lactococcus</taxon>
        <taxon>Lactococcus cremoris subsp. cremoris</taxon>
    </lineage>
</organism>
<dbReference type="EMBL" id="CP000425">
    <property type="protein sequence ID" value="ABJ73931.1"/>
    <property type="molecule type" value="Genomic_DNA"/>
</dbReference>
<dbReference type="RefSeq" id="WP_003131952.1">
    <property type="nucleotide sequence ID" value="NC_008527.1"/>
</dbReference>
<dbReference type="SMR" id="Q02VU1"/>
<dbReference type="GeneID" id="89634533"/>
<dbReference type="KEGG" id="llc:LACR_2501"/>
<dbReference type="HOGENOM" id="CLU_148710_2_2_9"/>
<dbReference type="Proteomes" id="UP000000240">
    <property type="component" value="Chromosome"/>
</dbReference>
<dbReference type="GO" id="GO:0022627">
    <property type="term" value="C:cytosolic small ribosomal subunit"/>
    <property type="evidence" value="ECO:0007669"/>
    <property type="project" value="TreeGrafter"/>
</dbReference>
<dbReference type="GO" id="GO:0070181">
    <property type="term" value="F:small ribosomal subunit rRNA binding"/>
    <property type="evidence" value="ECO:0007669"/>
    <property type="project" value="TreeGrafter"/>
</dbReference>
<dbReference type="GO" id="GO:0003735">
    <property type="term" value="F:structural constituent of ribosome"/>
    <property type="evidence" value="ECO:0007669"/>
    <property type="project" value="InterPro"/>
</dbReference>
<dbReference type="GO" id="GO:0006412">
    <property type="term" value="P:translation"/>
    <property type="evidence" value="ECO:0007669"/>
    <property type="project" value="UniProtKB-UniRule"/>
</dbReference>
<dbReference type="FunFam" id="4.10.640.10:FF:000003">
    <property type="entry name" value="30S ribosomal protein S18"/>
    <property type="match status" value="1"/>
</dbReference>
<dbReference type="Gene3D" id="4.10.640.10">
    <property type="entry name" value="Ribosomal protein S18"/>
    <property type="match status" value="1"/>
</dbReference>
<dbReference type="HAMAP" id="MF_00270">
    <property type="entry name" value="Ribosomal_bS18"/>
    <property type="match status" value="1"/>
</dbReference>
<dbReference type="InterPro" id="IPR001648">
    <property type="entry name" value="Ribosomal_bS18"/>
</dbReference>
<dbReference type="InterPro" id="IPR018275">
    <property type="entry name" value="Ribosomal_bS18_CS"/>
</dbReference>
<dbReference type="InterPro" id="IPR036870">
    <property type="entry name" value="Ribosomal_bS18_sf"/>
</dbReference>
<dbReference type="NCBIfam" id="TIGR00165">
    <property type="entry name" value="S18"/>
    <property type="match status" value="1"/>
</dbReference>
<dbReference type="PANTHER" id="PTHR13479">
    <property type="entry name" value="30S RIBOSOMAL PROTEIN S18"/>
    <property type="match status" value="1"/>
</dbReference>
<dbReference type="PANTHER" id="PTHR13479:SF40">
    <property type="entry name" value="SMALL RIBOSOMAL SUBUNIT PROTEIN BS18M"/>
    <property type="match status" value="1"/>
</dbReference>
<dbReference type="Pfam" id="PF01084">
    <property type="entry name" value="Ribosomal_S18"/>
    <property type="match status" value="1"/>
</dbReference>
<dbReference type="PRINTS" id="PR00974">
    <property type="entry name" value="RIBOSOMALS18"/>
</dbReference>
<dbReference type="SUPFAM" id="SSF46911">
    <property type="entry name" value="Ribosomal protein S18"/>
    <property type="match status" value="1"/>
</dbReference>
<dbReference type="PROSITE" id="PS00057">
    <property type="entry name" value="RIBOSOMAL_S18"/>
    <property type="match status" value="1"/>
</dbReference>
<comment type="function">
    <text evidence="1">Binds as a heterodimer with protein bS6 to the central domain of the 16S rRNA, where it helps stabilize the platform of the 30S subunit.</text>
</comment>
<comment type="subunit">
    <text evidence="1">Part of the 30S ribosomal subunit. Forms a tight heterodimer with protein bS6.</text>
</comment>
<comment type="similarity">
    <text evidence="1">Belongs to the bacterial ribosomal protein bS18 family.</text>
</comment>
<keyword id="KW-0687">Ribonucleoprotein</keyword>
<keyword id="KW-0689">Ribosomal protein</keyword>
<keyword id="KW-0694">RNA-binding</keyword>
<keyword id="KW-0699">rRNA-binding</keyword>
<sequence length="81" mass="9371">MAQQRRGGFKRRKKVDFIAANKIEVVDYKDTELLKRFISERGKILPRRVTGTSAKNQRKVVNAIKRARVMALLPFVAEDQN</sequence>
<accession>Q02VU1</accession>
<protein>
    <recommendedName>
        <fullName evidence="1">Small ribosomal subunit protein bS18</fullName>
    </recommendedName>
    <alternativeName>
        <fullName evidence="2">30S ribosomal protein S18</fullName>
    </alternativeName>
</protein>
<evidence type="ECO:0000255" key="1">
    <source>
        <dbReference type="HAMAP-Rule" id="MF_00270"/>
    </source>
</evidence>
<evidence type="ECO:0000305" key="2"/>
<reference key="1">
    <citation type="journal article" date="2006" name="Proc. Natl. Acad. Sci. U.S.A.">
        <title>Comparative genomics of the lactic acid bacteria.</title>
        <authorList>
            <person name="Makarova K.S."/>
            <person name="Slesarev A."/>
            <person name="Wolf Y.I."/>
            <person name="Sorokin A."/>
            <person name="Mirkin B."/>
            <person name="Koonin E.V."/>
            <person name="Pavlov A."/>
            <person name="Pavlova N."/>
            <person name="Karamychev V."/>
            <person name="Polouchine N."/>
            <person name="Shakhova V."/>
            <person name="Grigoriev I."/>
            <person name="Lou Y."/>
            <person name="Rohksar D."/>
            <person name="Lucas S."/>
            <person name="Huang K."/>
            <person name="Goodstein D.M."/>
            <person name="Hawkins T."/>
            <person name="Plengvidhya V."/>
            <person name="Welker D."/>
            <person name="Hughes J."/>
            <person name="Goh Y."/>
            <person name="Benson A."/>
            <person name="Baldwin K."/>
            <person name="Lee J.-H."/>
            <person name="Diaz-Muniz I."/>
            <person name="Dosti B."/>
            <person name="Smeianov V."/>
            <person name="Wechter W."/>
            <person name="Barabote R."/>
            <person name="Lorca G."/>
            <person name="Altermann E."/>
            <person name="Barrangou R."/>
            <person name="Ganesan B."/>
            <person name="Xie Y."/>
            <person name="Rawsthorne H."/>
            <person name="Tamir D."/>
            <person name="Parker C."/>
            <person name="Breidt F."/>
            <person name="Broadbent J.R."/>
            <person name="Hutkins R."/>
            <person name="O'Sullivan D."/>
            <person name="Steele J."/>
            <person name="Unlu G."/>
            <person name="Saier M.H. Jr."/>
            <person name="Klaenhammer T."/>
            <person name="Richardson P."/>
            <person name="Kozyavkin S."/>
            <person name="Weimer B.C."/>
            <person name="Mills D.A."/>
        </authorList>
    </citation>
    <scope>NUCLEOTIDE SEQUENCE [LARGE SCALE GENOMIC DNA]</scope>
    <source>
        <strain>SK11</strain>
    </source>
</reference>
<feature type="chain" id="PRO_1000003520" description="Small ribosomal subunit protein bS18">
    <location>
        <begin position="1"/>
        <end position="81"/>
    </location>
</feature>
<name>RS18_LACLS</name>
<gene>
    <name evidence="1" type="primary">rpsR</name>
    <name type="ordered locus">LACR_2501</name>
</gene>